<reference key="1">
    <citation type="submission" date="2006-06" db="EMBL/GenBank/DDBJ databases">
        <title>Complete sequence of Pseudoalteromonas atlantica T6c.</title>
        <authorList>
            <consortium name="US DOE Joint Genome Institute"/>
            <person name="Copeland A."/>
            <person name="Lucas S."/>
            <person name="Lapidus A."/>
            <person name="Barry K."/>
            <person name="Detter J.C."/>
            <person name="Glavina del Rio T."/>
            <person name="Hammon N."/>
            <person name="Israni S."/>
            <person name="Dalin E."/>
            <person name="Tice H."/>
            <person name="Pitluck S."/>
            <person name="Saunders E."/>
            <person name="Brettin T."/>
            <person name="Bruce D."/>
            <person name="Han C."/>
            <person name="Tapia R."/>
            <person name="Gilna P."/>
            <person name="Schmutz J."/>
            <person name="Larimer F."/>
            <person name="Land M."/>
            <person name="Hauser L."/>
            <person name="Kyrpides N."/>
            <person name="Kim E."/>
            <person name="Karls A.C."/>
            <person name="Bartlett D."/>
            <person name="Higgins B.P."/>
            <person name="Richardson P."/>
        </authorList>
    </citation>
    <scope>NUCLEOTIDE SEQUENCE [LARGE SCALE GENOMIC DNA]</scope>
    <source>
        <strain>T6c / ATCC BAA-1087</strain>
    </source>
</reference>
<feature type="chain" id="PRO_0000387048" description="Ribosomal RNA small subunit methyltransferase H">
    <location>
        <begin position="1"/>
        <end position="311"/>
    </location>
</feature>
<feature type="binding site" evidence="1">
    <location>
        <begin position="35"/>
        <end position="37"/>
    </location>
    <ligand>
        <name>S-adenosyl-L-methionine</name>
        <dbReference type="ChEBI" id="CHEBI:59789"/>
    </ligand>
</feature>
<feature type="binding site" evidence="1">
    <location>
        <position position="55"/>
    </location>
    <ligand>
        <name>S-adenosyl-L-methionine</name>
        <dbReference type="ChEBI" id="CHEBI:59789"/>
    </ligand>
</feature>
<feature type="binding site" evidence="1">
    <location>
        <position position="80"/>
    </location>
    <ligand>
        <name>S-adenosyl-L-methionine</name>
        <dbReference type="ChEBI" id="CHEBI:59789"/>
    </ligand>
</feature>
<feature type="binding site" evidence="1">
    <location>
        <position position="102"/>
    </location>
    <ligand>
        <name>S-adenosyl-L-methionine</name>
        <dbReference type="ChEBI" id="CHEBI:59789"/>
    </ligand>
</feature>
<feature type="binding site" evidence="1">
    <location>
        <position position="109"/>
    </location>
    <ligand>
        <name>S-adenosyl-L-methionine</name>
        <dbReference type="ChEBI" id="CHEBI:59789"/>
    </ligand>
</feature>
<protein>
    <recommendedName>
        <fullName evidence="1">Ribosomal RNA small subunit methyltransferase H</fullName>
        <ecNumber evidence="1">2.1.1.199</ecNumber>
    </recommendedName>
    <alternativeName>
        <fullName evidence="1">16S rRNA m(4)C1402 methyltransferase</fullName>
    </alternativeName>
    <alternativeName>
        <fullName evidence="1">rRNA (cytosine-N(4)-)-methyltransferase RsmH</fullName>
    </alternativeName>
</protein>
<dbReference type="EC" id="2.1.1.199" evidence="1"/>
<dbReference type="EMBL" id="CP000388">
    <property type="protein sequence ID" value="ABG42029.1"/>
    <property type="molecule type" value="Genomic_DNA"/>
</dbReference>
<dbReference type="RefSeq" id="WP_011576257.1">
    <property type="nucleotide sequence ID" value="NC_008228.1"/>
</dbReference>
<dbReference type="SMR" id="Q15Q09"/>
<dbReference type="STRING" id="342610.Patl_3527"/>
<dbReference type="KEGG" id="pat:Patl_3527"/>
<dbReference type="eggNOG" id="COG0275">
    <property type="taxonomic scope" value="Bacteria"/>
</dbReference>
<dbReference type="HOGENOM" id="CLU_038422_2_0_6"/>
<dbReference type="OrthoDB" id="9806637at2"/>
<dbReference type="Proteomes" id="UP000001981">
    <property type="component" value="Chromosome"/>
</dbReference>
<dbReference type="GO" id="GO:0005737">
    <property type="term" value="C:cytoplasm"/>
    <property type="evidence" value="ECO:0007669"/>
    <property type="project" value="UniProtKB-SubCell"/>
</dbReference>
<dbReference type="GO" id="GO:0071424">
    <property type="term" value="F:rRNA (cytosine-N4-)-methyltransferase activity"/>
    <property type="evidence" value="ECO:0007669"/>
    <property type="project" value="UniProtKB-UniRule"/>
</dbReference>
<dbReference type="GO" id="GO:0070475">
    <property type="term" value="P:rRNA base methylation"/>
    <property type="evidence" value="ECO:0007669"/>
    <property type="project" value="UniProtKB-UniRule"/>
</dbReference>
<dbReference type="FunFam" id="1.10.150.170:FF:000001">
    <property type="entry name" value="Ribosomal RNA small subunit methyltransferase H"/>
    <property type="match status" value="1"/>
</dbReference>
<dbReference type="Gene3D" id="1.10.150.170">
    <property type="entry name" value="Putative methyltransferase TM0872, insert domain"/>
    <property type="match status" value="1"/>
</dbReference>
<dbReference type="Gene3D" id="3.40.50.150">
    <property type="entry name" value="Vaccinia Virus protein VP39"/>
    <property type="match status" value="1"/>
</dbReference>
<dbReference type="HAMAP" id="MF_01007">
    <property type="entry name" value="16SrRNA_methyltr_H"/>
    <property type="match status" value="1"/>
</dbReference>
<dbReference type="InterPro" id="IPR002903">
    <property type="entry name" value="RsmH"/>
</dbReference>
<dbReference type="InterPro" id="IPR023397">
    <property type="entry name" value="SAM-dep_MeTrfase_MraW_recog"/>
</dbReference>
<dbReference type="InterPro" id="IPR029063">
    <property type="entry name" value="SAM-dependent_MTases_sf"/>
</dbReference>
<dbReference type="NCBIfam" id="TIGR00006">
    <property type="entry name" value="16S rRNA (cytosine(1402)-N(4))-methyltransferase RsmH"/>
    <property type="match status" value="1"/>
</dbReference>
<dbReference type="PANTHER" id="PTHR11265:SF0">
    <property type="entry name" value="12S RRNA N4-METHYLCYTIDINE METHYLTRANSFERASE"/>
    <property type="match status" value="1"/>
</dbReference>
<dbReference type="PANTHER" id="PTHR11265">
    <property type="entry name" value="S-ADENOSYL-METHYLTRANSFERASE MRAW"/>
    <property type="match status" value="1"/>
</dbReference>
<dbReference type="Pfam" id="PF01795">
    <property type="entry name" value="Methyltransf_5"/>
    <property type="match status" value="1"/>
</dbReference>
<dbReference type="PIRSF" id="PIRSF004486">
    <property type="entry name" value="MraW"/>
    <property type="match status" value="1"/>
</dbReference>
<dbReference type="SUPFAM" id="SSF81799">
    <property type="entry name" value="Putative methyltransferase TM0872, insert domain"/>
    <property type="match status" value="1"/>
</dbReference>
<dbReference type="SUPFAM" id="SSF53335">
    <property type="entry name" value="S-adenosyl-L-methionine-dependent methyltransferases"/>
    <property type="match status" value="1"/>
</dbReference>
<proteinExistence type="inferred from homology"/>
<accession>Q15Q09</accession>
<name>RSMH_PSEA6</name>
<sequence length="311" mass="34223">MTTQPSHLSVLLQESIDGLAIKPDGVYLDATFGRGGHTKQILSQLSPNGRLIALDRDPSAIEAAKALADDARFSIHHCNFSEMEDVLTSLELHGKVDGILMDLGVSSPQLDEPERGFSFMREGPLDMRMNPTKGQSAAQWLAHAEEQDIAQVIKEFGEEKFGKRIAHGIVNARQEAPITTTAQLAEIIDLAVPVKDKFKHPATRSFQGIRIYINSELDEIRTGLKAALNSLNSGGRLSVISFHSLEDRLVKRFIREQSRGLQVPHGLPIMQAEIDSHKAMKAIGKAIKPSSDELSRNVRARSSVLRVAEKL</sequence>
<organism>
    <name type="scientific">Pseudoalteromonas atlantica (strain T6c / ATCC BAA-1087)</name>
    <dbReference type="NCBI Taxonomy" id="3042615"/>
    <lineage>
        <taxon>Bacteria</taxon>
        <taxon>Pseudomonadati</taxon>
        <taxon>Pseudomonadota</taxon>
        <taxon>Gammaproteobacteria</taxon>
        <taxon>Alteromonadales</taxon>
        <taxon>Alteromonadaceae</taxon>
        <taxon>Paraglaciecola</taxon>
    </lineage>
</organism>
<comment type="function">
    <text evidence="1">Specifically methylates the N4 position of cytidine in position 1402 (C1402) of 16S rRNA.</text>
</comment>
<comment type="catalytic activity">
    <reaction evidence="1">
        <text>cytidine(1402) in 16S rRNA + S-adenosyl-L-methionine = N(4)-methylcytidine(1402) in 16S rRNA + S-adenosyl-L-homocysteine + H(+)</text>
        <dbReference type="Rhea" id="RHEA:42928"/>
        <dbReference type="Rhea" id="RHEA-COMP:10286"/>
        <dbReference type="Rhea" id="RHEA-COMP:10287"/>
        <dbReference type="ChEBI" id="CHEBI:15378"/>
        <dbReference type="ChEBI" id="CHEBI:57856"/>
        <dbReference type="ChEBI" id="CHEBI:59789"/>
        <dbReference type="ChEBI" id="CHEBI:74506"/>
        <dbReference type="ChEBI" id="CHEBI:82748"/>
        <dbReference type="EC" id="2.1.1.199"/>
    </reaction>
</comment>
<comment type="subcellular location">
    <subcellularLocation>
        <location evidence="1">Cytoplasm</location>
    </subcellularLocation>
</comment>
<comment type="similarity">
    <text evidence="1">Belongs to the methyltransferase superfamily. RsmH family.</text>
</comment>
<gene>
    <name evidence="1" type="primary">rsmH</name>
    <name type="synonym">mraW</name>
    <name type="ordered locus">Patl_3527</name>
</gene>
<keyword id="KW-0963">Cytoplasm</keyword>
<keyword id="KW-0489">Methyltransferase</keyword>
<keyword id="KW-0698">rRNA processing</keyword>
<keyword id="KW-0949">S-adenosyl-L-methionine</keyword>
<keyword id="KW-0808">Transferase</keyword>
<evidence type="ECO:0000255" key="1">
    <source>
        <dbReference type="HAMAP-Rule" id="MF_01007"/>
    </source>
</evidence>